<feature type="peptide" id="PRO_0000043627" description="Varv peptide G">
    <location>
        <begin position="1"/>
        <end position="30"/>
    </location>
</feature>
<feature type="disulfide bond">
    <location>
        <begin position="5"/>
        <end position="19"/>
    </location>
</feature>
<feature type="disulfide bond">
    <location>
        <begin position="9"/>
        <end position="21"/>
    </location>
</feature>
<feature type="disulfide bond">
    <location>
        <begin position="14"/>
        <end position="27"/>
    </location>
</feature>
<feature type="cross-link" description="Cyclopeptide (Gly-Asn)">
    <location>
        <begin position="1"/>
        <end position="30"/>
    </location>
</feature>
<keyword id="KW-0903">Direct protein sequencing</keyword>
<keyword id="KW-1015">Disulfide bond</keyword>
<keyword id="KW-0960">Knottin</keyword>
<keyword id="KW-0611">Plant defense</keyword>
<proteinExistence type="evidence at protein level"/>
<dbReference type="SMR" id="P58452"/>
<dbReference type="GO" id="GO:0006952">
    <property type="term" value="P:defense response"/>
    <property type="evidence" value="ECO:0000250"/>
    <property type="project" value="UniProtKB"/>
</dbReference>
<dbReference type="InterPro" id="IPR005535">
    <property type="entry name" value="Cyclotide"/>
</dbReference>
<dbReference type="InterPro" id="IPR012324">
    <property type="entry name" value="Cyclotide_moebius_CS"/>
</dbReference>
<dbReference type="InterPro" id="IPR036146">
    <property type="entry name" value="Cyclotide_sf"/>
</dbReference>
<dbReference type="Pfam" id="PF03784">
    <property type="entry name" value="Cyclotide"/>
    <property type="match status" value="1"/>
</dbReference>
<dbReference type="PIRSF" id="PIRSF037891">
    <property type="entry name" value="Cycloviolacin"/>
    <property type="match status" value="1"/>
</dbReference>
<dbReference type="SUPFAM" id="SSF57038">
    <property type="entry name" value="Cyclotides"/>
    <property type="match status" value="1"/>
</dbReference>
<dbReference type="PROSITE" id="PS51052">
    <property type="entry name" value="CYCLOTIDE"/>
    <property type="match status" value="1"/>
</dbReference>
<dbReference type="PROSITE" id="PS60009">
    <property type="entry name" value="CYCLOTIDE_MOEBIUS"/>
    <property type="match status" value="1"/>
</dbReference>
<name>VARG_VIOAR</name>
<comment type="function">
    <text>Probably participates in a plant defense mechanism.</text>
</comment>
<comment type="domain">
    <text>The presence of a 'disulfide through disulfide knot' structurally defines this protein as a knottin.</text>
</comment>
<comment type="PTM">
    <text>This is a cyclic peptide.</text>
</comment>
<comment type="mass spectrometry"/>
<comment type="similarity">
    <text evidence="1">Belongs to the cyclotide family. Moebius subfamily.</text>
</comment>
<comment type="caution">
    <text evidence="3">This peptide is cyclic. The start position was chosen by similarity to OAK1 (kalata-B1) for which the DNA sequence is known.</text>
</comment>
<reference key="1">
    <citation type="journal article" date="1999" name="J. Nat. Prod.">
        <title>Seven novel macrocyclic polypeptides from Viola arvensis.</title>
        <authorList>
            <person name="Goeransson U."/>
            <person name="Luijendijk T."/>
            <person name="Johansson S."/>
            <person name="Bohlin L."/>
            <person name="Claeson P."/>
        </authorList>
    </citation>
    <scope>PROTEIN SEQUENCE</scope>
    <scope>MASS SPECTROMETRY</scope>
</reference>
<sequence>GVPVCGETCFGGTCNTPGCSCDPWPVCSRN</sequence>
<accession>P58452</accession>
<protein>
    <recommendedName>
        <fullName>Varv peptide G</fullName>
    </recommendedName>
</protein>
<organism>
    <name type="scientific">Viola arvensis</name>
    <name type="common">European field pansy</name>
    <name type="synonym">Field violet</name>
    <dbReference type="NCBI Taxonomy" id="97415"/>
    <lineage>
        <taxon>Eukaryota</taxon>
        <taxon>Viridiplantae</taxon>
        <taxon>Streptophyta</taxon>
        <taxon>Embryophyta</taxon>
        <taxon>Tracheophyta</taxon>
        <taxon>Spermatophyta</taxon>
        <taxon>Magnoliopsida</taxon>
        <taxon>eudicotyledons</taxon>
        <taxon>Gunneridae</taxon>
        <taxon>Pentapetalae</taxon>
        <taxon>rosids</taxon>
        <taxon>fabids</taxon>
        <taxon>Malpighiales</taxon>
        <taxon>Violaceae</taxon>
        <taxon>Viola</taxon>
        <taxon>Viola subgen. Viola</taxon>
        <taxon>Viola sect. Melanium</taxon>
        <taxon>Viola subsect. Bracteolatae</taxon>
    </lineage>
</organism>
<evidence type="ECO:0000255" key="1">
    <source>
        <dbReference type="PROSITE-ProRule" id="PRU00395"/>
    </source>
</evidence>
<evidence type="ECO:0000269" key="2">
    <source>
    </source>
</evidence>
<evidence type="ECO:0000305" key="3"/>